<sequence>MLASTFATHPAAAAAARRRGPIRWRLPFCSQIVTVTLRRRFPMARLSITNALASQSLESAPAAPPKHSFPILVNSCTGKMGKAVAEAAVSAGLQLVPVSFSAIEVPDGKVEICDREIYIRDPSEGESILPSIAKDYPDMIVVDYTVPDAVNANAELYCKLGLPFVMGTTGGNRQLLHKTVEDANVYAVISPQMGKQVVAFLAAMEIMAEQFPGAFSGYKLEVMESHQATKLDISGTAKAVISCFQKLGVSFNLNEVKQVRDPQEQLTLVGVPEEHLSGHAFHMYHLTSPDETVSFEFQHNVCGRSIYAEGTVDAALFLHKKIQSGANKKLYDMIDVLREGNMR</sequence>
<feature type="transit peptide" description="Chloroplast" evidence="2">
    <location>
        <begin position="1"/>
        <end position="14"/>
    </location>
</feature>
<feature type="chain" id="PRO_0000307185" description="Probable 4-hydroxy-tetrahydrodipicolinate reductase 1, chloroplastic">
    <location>
        <begin position="15"/>
        <end position="343"/>
    </location>
</feature>
<feature type="active site" description="Proton donor/acceptor" evidence="1">
    <location>
        <position position="226"/>
    </location>
</feature>
<feature type="active site" description="Proton donor" evidence="1">
    <location>
        <position position="230"/>
    </location>
</feature>
<feature type="binding site" evidence="1">
    <location>
        <begin position="167"/>
        <end position="169"/>
    </location>
    <ligand>
        <name>NAD(+)</name>
        <dbReference type="ChEBI" id="CHEBI:57540"/>
    </ligand>
</feature>
<feature type="binding site" evidence="1">
    <location>
        <begin position="190"/>
        <end position="193"/>
    </location>
    <ligand>
        <name>NAD(+)</name>
        <dbReference type="ChEBI" id="CHEBI:57540"/>
    </ligand>
</feature>
<feature type="binding site" evidence="1">
    <location>
        <begin position="235"/>
        <end position="236"/>
    </location>
    <ligand>
        <name>(S)-2,3,4,5-tetrahydrodipicolinate</name>
        <dbReference type="ChEBI" id="CHEBI:16845"/>
    </ligand>
</feature>
<keyword id="KW-0028">Amino-acid biosynthesis</keyword>
<keyword id="KW-0150">Chloroplast</keyword>
<keyword id="KW-0220">Diaminopimelate biosynthesis</keyword>
<keyword id="KW-0457">Lysine biosynthesis</keyword>
<keyword id="KW-0520">NAD</keyword>
<keyword id="KW-0521">NADP</keyword>
<keyword id="KW-0560">Oxidoreductase</keyword>
<keyword id="KW-0934">Plastid</keyword>
<keyword id="KW-1185">Reference proteome</keyword>
<keyword id="KW-0809">Transit peptide</keyword>
<protein>
    <recommendedName>
        <fullName>Probable 4-hydroxy-tetrahydrodipicolinate reductase 1, chloroplastic</fullName>
        <shortName>HTPA reductase 1</shortName>
        <ecNumber>1.17.1.8</ecNumber>
    </recommendedName>
</protein>
<evidence type="ECO:0000250" key="1"/>
<evidence type="ECO:0000255" key="2"/>
<evidence type="ECO:0000305" key="3"/>
<evidence type="ECO:0000312" key="4">
    <source>
        <dbReference type="EMBL" id="EEE56888.1"/>
    </source>
</evidence>
<organism>
    <name type="scientific">Oryza sativa subsp. japonica</name>
    <name type="common">Rice</name>
    <dbReference type="NCBI Taxonomy" id="39947"/>
    <lineage>
        <taxon>Eukaryota</taxon>
        <taxon>Viridiplantae</taxon>
        <taxon>Streptophyta</taxon>
        <taxon>Embryophyta</taxon>
        <taxon>Tracheophyta</taxon>
        <taxon>Spermatophyta</taxon>
        <taxon>Magnoliopsida</taxon>
        <taxon>Liliopsida</taxon>
        <taxon>Poales</taxon>
        <taxon>Poaceae</taxon>
        <taxon>BOP clade</taxon>
        <taxon>Oryzoideae</taxon>
        <taxon>Oryzeae</taxon>
        <taxon>Oryzinae</taxon>
        <taxon>Oryza</taxon>
        <taxon>Oryza sativa</taxon>
    </lineage>
</organism>
<proteinExistence type="evidence at transcript level"/>
<name>DAPB1_ORYSJ</name>
<accession>Q67W29</accession>
<accession>A3A6B8</accession>
<accession>B7EB68</accession>
<reference key="1">
    <citation type="journal article" date="2005" name="Nature">
        <title>The map-based sequence of the rice genome.</title>
        <authorList>
            <consortium name="International rice genome sequencing project (IRGSP)"/>
        </authorList>
    </citation>
    <scope>NUCLEOTIDE SEQUENCE [LARGE SCALE GENOMIC DNA]</scope>
    <source>
        <strain>cv. Nipponbare</strain>
    </source>
</reference>
<reference key="2">
    <citation type="journal article" date="2008" name="Nucleic Acids Res.">
        <title>The rice annotation project database (RAP-DB): 2008 update.</title>
        <authorList>
            <consortium name="The rice annotation project (RAP)"/>
        </authorList>
    </citation>
    <scope>GENOME REANNOTATION</scope>
    <source>
        <strain>cv. Nipponbare</strain>
    </source>
</reference>
<reference key="3">
    <citation type="journal article" date="2013" name="Rice">
        <title>Improvement of the Oryza sativa Nipponbare reference genome using next generation sequence and optical map data.</title>
        <authorList>
            <person name="Kawahara Y."/>
            <person name="de la Bastide M."/>
            <person name="Hamilton J.P."/>
            <person name="Kanamori H."/>
            <person name="McCombie W.R."/>
            <person name="Ouyang S."/>
            <person name="Schwartz D.C."/>
            <person name="Tanaka T."/>
            <person name="Wu J."/>
            <person name="Zhou S."/>
            <person name="Childs K.L."/>
            <person name="Davidson R.M."/>
            <person name="Lin H."/>
            <person name="Quesada-Ocampo L."/>
            <person name="Vaillancourt B."/>
            <person name="Sakai H."/>
            <person name="Lee S.S."/>
            <person name="Kim J."/>
            <person name="Numa H."/>
            <person name="Itoh T."/>
            <person name="Buell C.R."/>
            <person name="Matsumoto T."/>
        </authorList>
    </citation>
    <scope>GENOME REANNOTATION</scope>
    <source>
        <strain>cv. Nipponbare</strain>
    </source>
</reference>
<reference key="4">
    <citation type="journal article" date="2005" name="PLoS Biol.">
        <title>The genomes of Oryza sativa: a history of duplications.</title>
        <authorList>
            <person name="Yu J."/>
            <person name="Wang J."/>
            <person name="Lin W."/>
            <person name="Li S."/>
            <person name="Li H."/>
            <person name="Zhou J."/>
            <person name="Ni P."/>
            <person name="Dong W."/>
            <person name="Hu S."/>
            <person name="Zeng C."/>
            <person name="Zhang J."/>
            <person name="Zhang Y."/>
            <person name="Li R."/>
            <person name="Xu Z."/>
            <person name="Li S."/>
            <person name="Li X."/>
            <person name="Zheng H."/>
            <person name="Cong L."/>
            <person name="Lin L."/>
            <person name="Yin J."/>
            <person name="Geng J."/>
            <person name="Li G."/>
            <person name="Shi J."/>
            <person name="Liu J."/>
            <person name="Lv H."/>
            <person name="Li J."/>
            <person name="Wang J."/>
            <person name="Deng Y."/>
            <person name="Ran L."/>
            <person name="Shi X."/>
            <person name="Wang X."/>
            <person name="Wu Q."/>
            <person name="Li C."/>
            <person name="Ren X."/>
            <person name="Wang J."/>
            <person name="Wang X."/>
            <person name="Li D."/>
            <person name="Liu D."/>
            <person name="Zhang X."/>
            <person name="Ji Z."/>
            <person name="Zhao W."/>
            <person name="Sun Y."/>
            <person name="Zhang Z."/>
            <person name="Bao J."/>
            <person name="Han Y."/>
            <person name="Dong L."/>
            <person name="Ji J."/>
            <person name="Chen P."/>
            <person name="Wu S."/>
            <person name="Liu J."/>
            <person name="Xiao Y."/>
            <person name="Bu D."/>
            <person name="Tan J."/>
            <person name="Yang L."/>
            <person name="Ye C."/>
            <person name="Zhang J."/>
            <person name="Xu J."/>
            <person name="Zhou Y."/>
            <person name="Yu Y."/>
            <person name="Zhang B."/>
            <person name="Zhuang S."/>
            <person name="Wei H."/>
            <person name="Liu B."/>
            <person name="Lei M."/>
            <person name="Yu H."/>
            <person name="Li Y."/>
            <person name="Xu H."/>
            <person name="Wei S."/>
            <person name="He X."/>
            <person name="Fang L."/>
            <person name="Zhang Z."/>
            <person name="Zhang Y."/>
            <person name="Huang X."/>
            <person name="Su Z."/>
            <person name="Tong W."/>
            <person name="Li J."/>
            <person name="Tong Z."/>
            <person name="Li S."/>
            <person name="Ye J."/>
            <person name="Wang L."/>
            <person name="Fang L."/>
            <person name="Lei T."/>
            <person name="Chen C.-S."/>
            <person name="Chen H.-C."/>
            <person name="Xu Z."/>
            <person name="Li H."/>
            <person name="Huang H."/>
            <person name="Zhang F."/>
            <person name="Xu H."/>
            <person name="Li N."/>
            <person name="Zhao C."/>
            <person name="Li S."/>
            <person name="Dong L."/>
            <person name="Huang Y."/>
            <person name="Li L."/>
            <person name="Xi Y."/>
            <person name="Qi Q."/>
            <person name="Li W."/>
            <person name="Zhang B."/>
            <person name="Hu W."/>
            <person name="Zhang Y."/>
            <person name="Tian X."/>
            <person name="Jiao Y."/>
            <person name="Liang X."/>
            <person name="Jin J."/>
            <person name="Gao L."/>
            <person name="Zheng W."/>
            <person name="Hao B."/>
            <person name="Liu S.-M."/>
            <person name="Wang W."/>
            <person name="Yuan L."/>
            <person name="Cao M."/>
            <person name="McDermott J."/>
            <person name="Samudrala R."/>
            <person name="Wang J."/>
            <person name="Wong G.K.-S."/>
            <person name="Yang H."/>
        </authorList>
    </citation>
    <scope>NUCLEOTIDE SEQUENCE [LARGE SCALE GENOMIC DNA]</scope>
    <source>
        <strain>cv. Nipponbare</strain>
    </source>
</reference>
<reference key="5">
    <citation type="journal article" date="2003" name="Science">
        <title>Collection, mapping, and annotation of over 28,000 cDNA clones from japonica rice.</title>
        <authorList>
            <consortium name="The rice full-length cDNA consortium"/>
        </authorList>
    </citation>
    <scope>NUCLEOTIDE SEQUENCE [LARGE SCALE MRNA]</scope>
    <source>
        <strain>cv. Nipponbare</strain>
    </source>
</reference>
<dbReference type="EC" id="1.17.1.8"/>
<dbReference type="EMBL" id="AP004180">
    <property type="protein sequence ID" value="BAD37640.1"/>
    <property type="molecule type" value="Genomic_DNA"/>
</dbReference>
<dbReference type="EMBL" id="AP008208">
    <property type="protein sequence ID" value="BAF08650.1"/>
    <property type="molecule type" value="Genomic_DNA"/>
</dbReference>
<dbReference type="EMBL" id="AP014958">
    <property type="protein sequence ID" value="BAS78462.1"/>
    <property type="molecule type" value="Genomic_DNA"/>
</dbReference>
<dbReference type="EMBL" id="CM000139">
    <property type="protein sequence ID" value="EEE56888.1"/>
    <property type="molecule type" value="Genomic_DNA"/>
</dbReference>
<dbReference type="EMBL" id="AK065673">
    <property type="protein sequence ID" value="BAG89615.1"/>
    <property type="molecule type" value="mRNA"/>
</dbReference>
<dbReference type="RefSeq" id="XP_015622998.1">
    <property type="nucleotide sequence ID" value="XM_015767512.1"/>
</dbReference>
<dbReference type="SMR" id="Q67W29"/>
<dbReference type="FunCoup" id="Q67W29">
    <property type="interactions" value="242"/>
</dbReference>
<dbReference type="STRING" id="39947.Q67W29"/>
<dbReference type="PaxDb" id="39947-Q67W29"/>
<dbReference type="EnsemblPlants" id="Os02t0436400-01">
    <property type="protein sequence ID" value="Os02t0436400-01"/>
    <property type="gene ID" value="Os02g0436400"/>
</dbReference>
<dbReference type="Gramene" id="Os02t0436400-01">
    <property type="protein sequence ID" value="Os02t0436400-01"/>
    <property type="gene ID" value="Os02g0436400"/>
</dbReference>
<dbReference type="KEGG" id="dosa:Os02g0436400"/>
<dbReference type="eggNOG" id="ENOG502QPSY">
    <property type="taxonomic scope" value="Eukaryota"/>
</dbReference>
<dbReference type="HOGENOM" id="CLU_067216_0_1_1"/>
<dbReference type="InParanoid" id="Q67W29"/>
<dbReference type="OMA" id="GKQIVAM"/>
<dbReference type="OrthoDB" id="10259487at2759"/>
<dbReference type="PlantReactome" id="R-OSA-1119273">
    <property type="pathway name" value="Lysine biosynthesis I"/>
</dbReference>
<dbReference type="PlantReactome" id="R-OSA-1119283">
    <property type="pathway name" value="Lysine biosynthesis II"/>
</dbReference>
<dbReference type="PlantReactome" id="R-OSA-1119419">
    <property type="pathway name" value="Lysine biosynthesis VI"/>
</dbReference>
<dbReference type="UniPathway" id="UPA00034">
    <property type="reaction ID" value="UER00018"/>
</dbReference>
<dbReference type="Proteomes" id="UP000000763">
    <property type="component" value="Chromosome 2"/>
</dbReference>
<dbReference type="Proteomes" id="UP000007752">
    <property type="component" value="Chromosome 2"/>
</dbReference>
<dbReference type="Proteomes" id="UP000059680">
    <property type="component" value="Chromosome 2"/>
</dbReference>
<dbReference type="GO" id="GO:0009570">
    <property type="term" value="C:chloroplast stroma"/>
    <property type="evidence" value="ECO:0000318"/>
    <property type="project" value="GO_Central"/>
</dbReference>
<dbReference type="GO" id="GO:0008839">
    <property type="term" value="F:4-hydroxy-tetrahydrodipicolinate reductase"/>
    <property type="evidence" value="ECO:0000318"/>
    <property type="project" value="GO_Central"/>
</dbReference>
<dbReference type="GO" id="GO:0070402">
    <property type="term" value="F:NADPH binding"/>
    <property type="evidence" value="ECO:0007669"/>
    <property type="project" value="InterPro"/>
</dbReference>
<dbReference type="GO" id="GO:0019877">
    <property type="term" value="P:diaminopimelate biosynthetic process"/>
    <property type="evidence" value="ECO:0000318"/>
    <property type="project" value="GO_Central"/>
</dbReference>
<dbReference type="GO" id="GO:0009089">
    <property type="term" value="P:lysine biosynthetic process via diaminopimelate"/>
    <property type="evidence" value="ECO:0007669"/>
    <property type="project" value="UniProtKB-UniPathway"/>
</dbReference>
<dbReference type="CDD" id="cd02274">
    <property type="entry name" value="DHDPR_N"/>
    <property type="match status" value="1"/>
</dbReference>
<dbReference type="FunFam" id="3.40.50.720:FF:000264">
    <property type="entry name" value="4-hydroxy-tetrahydrodipicolinate reductase 2 chloroplastic"/>
    <property type="match status" value="1"/>
</dbReference>
<dbReference type="FunFam" id="3.30.360.10:FF:000037">
    <property type="entry name" value="4-hydroxy-tetrahydrodipicolinate reductase 2, chloroplastic"/>
    <property type="match status" value="1"/>
</dbReference>
<dbReference type="Gene3D" id="3.30.360.10">
    <property type="entry name" value="Dihydrodipicolinate Reductase, domain 2"/>
    <property type="match status" value="1"/>
</dbReference>
<dbReference type="Gene3D" id="3.40.50.720">
    <property type="entry name" value="NAD(P)-binding Rossmann-like Domain"/>
    <property type="match status" value="1"/>
</dbReference>
<dbReference type="InterPro" id="IPR022663">
    <property type="entry name" value="DapB_C"/>
</dbReference>
<dbReference type="InterPro" id="IPR000846">
    <property type="entry name" value="DapB_N"/>
</dbReference>
<dbReference type="InterPro" id="IPR023940">
    <property type="entry name" value="DHDPR_bac"/>
</dbReference>
<dbReference type="InterPro" id="IPR011859">
    <property type="entry name" value="Dihydrodipicolinate_Rdtase_pln"/>
</dbReference>
<dbReference type="InterPro" id="IPR036291">
    <property type="entry name" value="NAD(P)-bd_dom_sf"/>
</dbReference>
<dbReference type="NCBIfam" id="TIGR02130">
    <property type="entry name" value="dapB_plant"/>
    <property type="match status" value="1"/>
</dbReference>
<dbReference type="PANTHER" id="PTHR20836:SF0">
    <property type="entry name" value="4-HYDROXY-TETRAHYDRODIPICOLINATE REDUCTASE 1, CHLOROPLASTIC-RELATED"/>
    <property type="match status" value="1"/>
</dbReference>
<dbReference type="PANTHER" id="PTHR20836">
    <property type="entry name" value="DIHYDRODIPICOLINATE REDUCTASE"/>
    <property type="match status" value="1"/>
</dbReference>
<dbReference type="Pfam" id="PF05173">
    <property type="entry name" value="DapB_C"/>
    <property type="match status" value="1"/>
</dbReference>
<dbReference type="Pfam" id="PF01113">
    <property type="entry name" value="DapB_N"/>
    <property type="match status" value="1"/>
</dbReference>
<dbReference type="SUPFAM" id="SSF51735">
    <property type="entry name" value="NAD(P)-binding Rossmann-fold domains"/>
    <property type="match status" value="1"/>
</dbReference>
<comment type="function">
    <text evidence="1">Catalyzes the conversion of 4-hydroxy-tetrahydrodipicolinate (HTPA) to tetrahydrodipicolinate.</text>
</comment>
<comment type="catalytic activity">
    <reaction>
        <text>(S)-2,3,4,5-tetrahydrodipicolinate + NAD(+) + H2O = (2S,4S)-4-hydroxy-2,3,4,5-tetrahydrodipicolinate + NADH + H(+)</text>
        <dbReference type="Rhea" id="RHEA:35323"/>
        <dbReference type="ChEBI" id="CHEBI:15377"/>
        <dbReference type="ChEBI" id="CHEBI:15378"/>
        <dbReference type="ChEBI" id="CHEBI:16845"/>
        <dbReference type="ChEBI" id="CHEBI:57540"/>
        <dbReference type="ChEBI" id="CHEBI:57945"/>
        <dbReference type="ChEBI" id="CHEBI:67139"/>
        <dbReference type="EC" id="1.17.1.8"/>
    </reaction>
</comment>
<comment type="catalytic activity">
    <reaction>
        <text>(S)-2,3,4,5-tetrahydrodipicolinate + NADP(+) + H2O = (2S,4S)-4-hydroxy-2,3,4,5-tetrahydrodipicolinate + NADPH + H(+)</text>
        <dbReference type="Rhea" id="RHEA:35331"/>
        <dbReference type="ChEBI" id="CHEBI:15377"/>
        <dbReference type="ChEBI" id="CHEBI:15378"/>
        <dbReference type="ChEBI" id="CHEBI:16845"/>
        <dbReference type="ChEBI" id="CHEBI:57783"/>
        <dbReference type="ChEBI" id="CHEBI:58349"/>
        <dbReference type="ChEBI" id="CHEBI:67139"/>
        <dbReference type="EC" id="1.17.1.8"/>
    </reaction>
</comment>
<comment type="pathway">
    <text>Amino-acid biosynthesis; L-lysine biosynthesis via DAP pathway; (S)-tetrahydrodipicolinate from L-aspartate: step 4/4.</text>
</comment>
<comment type="subcellular location">
    <subcellularLocation>
        <location evidence="3">Plastid</location>
        <location evidence="3">Chloroplast</location>
    </subcellularLocation>
</comment>
<comment type="similarity">
    <text evidence="3">Belongs to the DapB family.</text>
</comment>
<comment type="caution">
    <text evidence="3">Was originally thought to be a dihydrodipicolinate reductase (DHDPR), catalyzing the conversion of dihydrodipicolinate to tetrahydrodipicolinate. However, it was shown in E.coli that the substrate of the enzymatic reaction is not dihydrodipicolinate (DHDP) but in fact (2S,4S)-4-hydroxy-2,3,4,5-tetrahydrodipicolinic acid (HTPA), the product released by the DapA-catalyzed reaction.</text>
</comment>
<gene>
    <name type="primary">DAPB1</name>
    <name type="ordered locus">Os02g0436400</name>
    <name type="ordered locus">LOC_Os02g24020</name>
    <name type="ORF">OJ1126_B05.33</name>
    <name type="ORF">OsJ_006340</name>
    <name evidence="4" type="ORF">OsJ_06538</name>
</gene>